<accession>P18427</accession>
<reference key="1">
    <citation type="journal article" date="1987" name="Mol. Endocrinol.">
        <title>Molecular cloning and nucleotide sequence analysis of complementary deoxyribonucleic acid for the beta-subunit of rat follicle stimulating hormone.</title>
        <authorList>
            <person name="Maurer R.A."/>
        </authorList>
    </citation>
    <scope>NUCLEOTIDE SEQUENCE</scope>
    <source>
        <strain>Holtzman</strain>
    </source>
</reference>
<reference key="2">
    <citation type="journal article" date="1989" name="DNA">
        <title>Isolation and characterization of the gene encoding the beta-subunit of rat follicle-stimulating hormone.</title>
        <authorList>
            <person name="Gharib S.D."/>
            <person name="Roy A."/>
            <person name="Wierman M.E."/>
            <person name="Chin W.W."/>
        </authorList>
    </citation>
    <scope>NUCLEOTIDE SEQUENCE [GENOMIC DNA]</scope>
</reference>
<reference key="3">
    <citation type="journal article" date="1990" name="Zool. Sci.">
        <title>Strain difference in nucleotide sequences of rat glycoprotein hormone subunit cDNAs and gene fragment.</title>
        <authorList>
            <person name="Kato Y."/>
            <person name="Ezashi T."/>
            <person name="Hirai T."/>
            <person name="Kato T."/>
        </authorList>
    </citation>
    <scope>NUCLEOTIDE SEQUENCE OF 55-130</scope>
    <source>
        <strain>Sprague-Dawley</strain>
    </source>
</reference>
<organism>
    <name type="scientific">Rattus norvegicus</name>
    <name type="common">Rat</name>
    <dbReference type="NCBI Taxonomy" id="10116"/>
    <lineage>
        <taxon>Eukaryota</taxon>
        <taxon>Metazoa</taxon>
        <taxon>Chordata</taxon>
        <taxon>Craniata</taxon>
        <taxon>Vertebrata</taxon>
        <taxon>Euteleostomi</taxon>
        <taxon>Mammalia</taxon>
        <taxon>Eutheria</taxon>
        <taxon>Euarchontoglires</taxon>
        <taxon>Glires</taxon>
        <taxon>Rodentia</taxon>
        <taxon>Myomorpha</taxon>
        <taxon>Muroidea</taxon>
        <taxon>Muridae</taxon>
        <taxon>Murinae</taxon>
        <taxon>Rattus</taxon>
    </lineage>
</organism>
<dbReference type="EMBL" id="M36804">
    <property type="status" value="NOT_ANNOTATED_CDS"/>
    <property type="molecule type" value="mRNA"/>
</dbReference>
<dbReference type="EMBL" id="M27048">
    <property type="protein sequence ID" value="AAB60705.1"/>
    <property type="molecule type" value="Genomic_DNA"/>
</dbReference>
<dbReference type="EMBL" id="M27044">
    <property type="protein sequence ID" value="AAB60705.1"/>
    <property type="status" value="JOINED"/>
    <property type="molecule type" value="Genomic_DNA"/>
</dbReference>
<dbReference type="EMBL" id="D00577">
    <property type="protein sequence ID" value="BAA00455.1"/>
    <property type="molecule type" value="Genomic_DNA"/>
</dbReference>
<dbReference type="PIR" id="A32893">
    <property type="entry name" value="A32893"/>
</dbReference>
<dbReference type="PIR" id="I83048">
    <property type="entry name" value="I83048"/>
</dbReference>
<dbReference type="RefSeq" id="NP_001007598.1">
    <property type="nucleotide sequence ID" value="NM_001007597.2"/>
</dbReference>
<dbReference type="SMR" id="P18427"/>
<dbReference type="FunCoup" id="P18427">
    <property type="interactions" value="78"/>
</dbReference>
<dbReference type="STRING" id="10116.ENSRNOP00000006512"/>
<dbReference type="GlyCosmos" id="P18427">
    <property type="glycosylation" value="2 sites, No reported glycans"/>
</dbReference>
<dbReference type="GlyGen" id="P18427">
    <property type="glycosylation" value="2 sites"/>
</dbReference>
<dbReference type="PhosphoSitePlus" id="P18427"/>
<dbReference type="PaxDb" id="10116-ENSRNOP00000006512"/>
<dbReference type="Ensembl" id="ENSRNOT00000006512.6">
    <property type="protein sequence ID" value="ENSRNOP00000006512.4"/>
    <property type="gene ID" value="ENSRNOG00000004898.6"/>
</dbReference>
<dbReference type="GeneID" id="25447"/>
<dbReference type="KEGG" id="rno:25447"/>
<dbReference type="UCSC" id="RGD:2630">
    <property type="organism name" value="rat"/>
</dbReference>
<dbReference type="AGR" id="RGD:2630"/>
<dbReference type="CTD" id="2488"/>
<dbReference type="RGD" id="2630">
    <property type="gene designation" value="Fshb"/>
</dbReference>
<dbReference type="eggNOG" id="ENOG502S39C">
    <property type="taxonomic scope" value="Eukaryota"/>
</dbReference>
<dbReference type="GeneTree" id="ENSGT00940000160051"/>
<dbReference type="HOGENOM" id="CLU_126319_3_0_1"/>
<dbReference type="InParanoid" id="P18427"/>
<dbReference type="OMA" id="PVATGCH"/>
<dbReference type="OrthoDB" id="8453657at2759"/>
<dbReference type="PhylomeDB" id="P18427"/>
<dbReference type="TreeFam" id="TF332940"/>
<dbReference type="Reactome" id="R-RNO-209822">
    <property type="pathway name" value="Glycoprotein hormones"/>
</dbReference>
<dbReference type="Reactome" id="R-RNO-375281">
    <property type="pathway name" value="Hormone ligand-binding receptors"/>
</dbReference>
<dbReference type="PRO" id="PR:P18427"/>
<dbReference type="Proteomes" id="UP000002494">
    <property type="component" value="Chromosome 3"/>
</dbReference>
<dbReference type="ExpressionAtlas" id="P18427">
    <property type="expression patterns" value="baseline and differential"/>
</dbReference>
<dbReference type="GO" id="GO:0005737">
    <property type="term" value="C:cytoplasm"/>
    <property type="evidence" value="ECO:0000266"/>
    <property type="project" value="RGD"/>
</dbReference>
<dbReference type="GO" id="GO:0005615">
    <property type="term" value="C:extracellular space"/>
    <property type="evidence" value="ECO:0000250"/>
    <property type="project" value="UniProtKB"/>
</dbReference>
<dbReference type="GO" id="GO:0016914">
    <property type="term" value="C:follicle-stimulating hormone complex"/>
    <property type="evidence" value="ECO:0000250"/>
    <property type="project" value="UniProtKB"/>
</dbReference>
<dbReference type="GO" id="GO:0016913">
    <property type="term" value="F:follicle-stimulating hormone activity"/>
    <property type="evidence" value="ECO:0000250"/>
    <property type="project" value="UniProtKB"/>
</dbReference>
<dbReference type="GO" id="GO:0042699">
    <property type="term" value="P:follicle-stimulating hormone signaling pathway"/>
    <property type="evidence" value="ECO:0000266"/>
    <property type="project" value="RGD"/>
</dbReference>
<dbReference type="GO" id="GO:0007186">
    <property type="term" value="P:G protein-coupled receptor signaling pathway"/>
    <property type="evidence" value="ECO:0000250"/>
    <property type="project" value="UniProtKB"/>
</dbReference>
<dbReference type="GO" id="GO:0001541">
    <property type="term" value="P:ovarian follicle development"/>
    <property type="evidence" value="ECO:0000266"/>
    <property type="project" value="RGD"/>
</dbReference>
<dbReference type="GO" id="GO:0045780">
    <property type="term" value="P:positive regulation of bone resorption"/>
    <property type="evidence" value="ECO:0000266"/>
    <property type="project" value="RGD"/>
</dbReference>
<dbReference type="GO" id="GO:0010628">
    <property type="term" value="P:positive regulation of gene expression"/>
    <property type="evidence" value="ECO:0000266"/>
    <property type="project" value="RGD"/>
</dbReference>
<dbReference type="GO" id="GO:0010893">
    <property type="term" value="P:positive regulation of steroid biosynthetic process"/>
    <property type="evidence" value="ECO:0000266"/>
    <property type="project" value="RGD"/>
</dbReference>
<dbReference type="GO" id="GO:0045670">
    <property type="term" value="P:regulation of osteoclast differentiation"/>
    <property type="evidence" value="ECO:0000266"/>
    <property type="project" value="RGD"/>
</dbReference>
<dbReference type="GO" id="GO:0010469">
    <property type="term" value="P:regulation of signaling receptor activity"/>
    <property type="evidence" value="ECO:0000250"/>
    <property type="project" value="UniProtKB"/>
</dbReference>
<dbReference type="GO" id="GO:0060011">
    <property type="term" value="P:Sertoli cell proliferation"/>
    <property type="evidence" value="ECO:0000266"/>
    <property type="project" value="RGD"/>
</dbReference>
<dbReference type="GO" id="GO:0007283">
    <property type="term" value="P:spermatogenesis"/>
    <property type="evidence" value="ECO:0000266"/>
    <property type="project" value="RGD"/>
</dbReference>
<dbReference type="GO" id="GO:0007179">
    <property type="term" value="P:transforming growth factor beta receptor signaling pathway"/>
    <property type="evidence" value="ECO:0000266"/>
    <property type="project" value="RGD"/>
</dbReference>
<dbReference type="CDD" id="cd00069">
    <property type="entry name" value="GHB_like"/>
    <property type="match status" value="1"/>
</dbReference>
<dbReference type="FunFam" id="2.10.90.10:FF:000007">
    <property type="entry name" value="Luteinizing hormone beta subunit"/>
    <property type="match status" value="1"/>
</dbReference>
<dbReference type="Gene3D" id="2.10.90.10">
    <property type="entry name" value="Cystine-knot cytokines"/>
    <property type="match status" value="1"/>
</dbReference>
<dbReference type="InterPro" id="IPR029034">
    <property type="entry name" value="Cystine-knot_cytokine"/>
</dbReference>
<dbReference type="InterPro" id="IPR006208">
    <property type="entry name" value="Glyco_hormone_CN"/>
</dbReference>
<dbReference type="InterPro" id="IPR001545">
    <property type="entry name" value="Gonadotropin_bsu"/>
</dbReference>
<dbReference type="InterPro" id="IPR018245">
    <property type="entry name" value="Gonadotropin_bsu_CS"/>
</dbReference>
<dbReference type="PANTHER" id="PTHR11515:SF17">
    <property type="entry name" value="FOLLITROPIN SUBUNIT BETA"/>
    <property type="match status" value="1"/>
</dbReference>
<dbReference type="PANTHER" id="PTHR11515">
    <property type="entry name" value="GLYCOPROTEIN HORMONE BETA CHAIN"/>
    <property type="match status" value="1"/>
</dbReference>
<dbReference type="Pfam" id="PF00007">
    <property type="entry name" value="Cys_knot"/>
    <property type="match status" value="1"/>
</dbReference>
<dbReference type="SMART" id="SM00068">
    <property type="entry name" value="GHB"/>
    <property type="match status" value="1"/>
</dbReference>
<dbReference type="SUPFAM" id="SSF57501">
    <property type="entry name" value="Cystine-knot cytokines"/>
    <property type="match status" value="1"/>
</dbReference>
<dbReference type="PROSITE" id="PS00689">
    <property type="entry name" value="GLYCO_HORMONE_BETA_2"/>
    <property type="match status" value="1"/>
</dbReference>
<gene>
    <name type="primary">Fshb</name>
</gene>
<feature type="signal peptide">
    <location>
        <begin position="1"/>
        <end position="20"/>
    </location>
</feature>
<feature type="chain" id="PRO_0000011716" description="Follitropin subunit beta">
    <location>
        <begin position="21"/>
        <end position="130"/>
    </location>
</feature>
<feature type="glycosylation site" description="N-linked (GlcNAc...) asparagine" evidence="1">
    <location>
        <position position="26"/>
    </location>
</feature>
<feature type="glycosylation site" description="N-linked (GlcNAc...) asparagine" evidence="1">
    <location>
        <position position="43"/>
    </location>
</feature>
<feature type="disulfide bond" evidence="1">
    <location>
        <begin position="22"/>
        <end position="70"/>
    </location>
</feature>
<feature type="disulfide bond" evidence="1">
    <location>
        <begin position="36"/>
        <end position="85"/>
    </location>
</feature>
<feature type="disulfide bond" evidence="1">
    <location>
        <begin position="39"/>
        <end position="123"/>
    </location>
</feature>
<feature type="disulfide bond" evidence="1">
    <location>
        <begin position="47"/>
        <end position="101"/>
    </location>
</feature>
<feature type="disulfide bond" evidence="1">
    <location>
        <begin position="51"/>
        <end position="103"/>
    </location>
</feature>
<feature type="disulfide bond" evidence="1">
    <location>
        <begin position="106"/>
        <end position="113"/>
    </location>
</feature>
<feature type="sequence variant" description="In strain: Sprague-Dawley.">
    <original>K</original>
    <variation>R</variation>
    <location>
        <position position="73"/>
    </location>
</feature>
<keyword id="KW-1015">Disulfide bond</keyword>
<keyword id="KW-0325">Glycoprotein</keyword>
<keyword id="KW-0372">Hormone</keyword>
<keyword id="KW-1185">Reference proteome</keyword>
<keyword id="KW-0964">Secreted</keyword>
<keyword id="KW-0732">Signal</keyword>
<protein>
    <recommendedName>
        <fullName>Follitropin subunit beta</fullName>
    </recommendedName>
    <alternativeName>
        <fullName>Follicle-stimulating hormone beta subunit</fullName>
        <shortName>FSH-B</shortName>
        <shortName>FSH-beta</shortName>
    </alternativeName>
    <alternativeName>
        <fullName>Follitropin beta chain</fullName>
    </alternativeName>
</protein>
<name>FSHB_RAT</name>
<sequence>MMKSIQLCILLWCLRAVCCHSCELTNITISVEKEECRFCISINTTWCEGYCYTRDLVYKDPARPNTQKVCTFKELVYETIRLPGCARHSDSLYTYPVATECHCGKCDSDSTDCTVRGLGPSYCSFGEMKE</sequence>
<comment type="function">
    <text evidence="1">Together with the alpha chain CGA constitutes follitropin, the follicle-stimulating hormone, and provides its biological specificity to the hormone heterodimer. Binds FSHR, a G protein-coupled receptor, on target cells to activate downstream signaling pathways. Follitropin is involved in follicle development and spermatogenesis in reproductive organs.</text>
</comment>
<comment type="subunit">
    <text evidence="1">Heterodimer. The active follitropin is a heterodimer composed of an alpha chain/CGA shared with other hormones and a unique beta chain/FSHB shown here.</text>
</comment>
<comment type="subcellular location">
    <subcellularLocation>
        <location evidence="1">Secreted</location>
    </subcellularLocation>
    <text evidence="1">Efficient secretion requires dimerization with CGA.</text>
</comment>
<comment type="similarity">
    <text evidence="2">Belongs to the glycoprotein hormones subunit beta family.</text>
</comment>
<proteinExistence type="evidence at transcript level"/>
<evidence type="ECO:0000250" key="1">
    <source>
        <dbReference type="UniProtKB" id="P01225"/>
    </source>
</evidence>
<evidence type="ECO:0000305" key="2"/>